<reference key="1">
    <citation type="journal article" date="2006" name="J. Bacteriol.">
        <title>The genome sequence of the obligately chemolithoautotrophic, facultatively anaerobic bacterium Thiobacillus denitrificans.</title>
        <authorList>
            <person name="Beller H.R."/>
            <person name="Chain P.S."/>
            <person name="Letain T.E."/>
            <person name="Chakicherla A."/>
            <person name="Larimer F.W."/>
            <person name="Richardson P.M."/>
            <person name="Coleman M.A."/>
            <person name="Wood A.P."/>
            <person name="Kelly D.P."/>
        </authorList>
    </citation>
    <scope>NUCLEOTIDE SEQUENCE [LARGE SCALE GENOMIC DNA]</scope>
    <source>
        <strain>ATCC 25259 / T1</strain>
    </source>
</reference>
<evidence type="ECO:0000255" key="1">
    <source>
        <dbReference type="HAMAP-Rule" id="MF_00580"/>
    </source>
</evidence>
<gene>
    <name evidence="1" type="primary">groES</name>
    <name evidence="1" type="synonym">groS</name>
    <name type="ordered locus">Tbd_0092</name>
</gene>
<organism>
    <name type="scientific">Thiobacillus denitrificans (strain ATCC 25259 / T1)</name>
    <dbReference type="NCBI Taxonomy" id="292415"/>
    <lineage>
        <taxon>Bacteria</taxon>
        <taxon>Pseudomonadati</taxon>
        <taxon>Pseudomonadota</taxon>
        <taxon>Betaproteobacteria</taxon>
        <taxon>Nitrosomonadales</taxon>
        <taxon>Thiobacillaceae</taxon>
        <taxon>Thiobacillus</taxon>
    </lineage>
</organism>
<comment type="function">
    <text evidence="1">Together with the chaperonin GroEL, plays an essential role in assisting protein folding. The GroEL-GroES system forms a nano-cage that allows encapsulation of the non-native substrate proteins and provides a physical environment optimized to promote and accelerate protein folding. GroES binds to the apical surface of the GroEL ring, thereby capping the opening of the GroEL channel.</text>
</comment>
<comment type="subunit">
    <text evidence="1">Heptamer of 7 subunits arranged in a ring. Interacts with the chaperonin GroEL.</text>
</comment>
<comment type="subcellular location">
    <subcellularLocation>
        <location evidence="1">Cytoplasm</location>
    </subcellularLocation>
</comment>
<comment type="similarity">
    <text evidence="1">Belongs to the GroES chaperonin family.</text>
</comment>
<sequence>MKIRPLHDRVIVKRMEEERKTASGIVIPDTAAEKPDQGEIVAVGAGKKDDQGKLISLDVKVGDRVLFGKYAGQTVKVEGEELLVMREEDIMGVVEQ</sequence>
<feature type="chain" id="PRO_1000025395" description="Co-chaperonin GroES">
    <location>
        <begin position="1"/>
        <end position="96"/>
    </location>
</feature>
<keyword id="KW-0143">Chaperone</keyword>
<keyword id="KW-0963">Cytoplasm</keyword>
<keyword id="KW-1185">Reference proteome</keyword>
<name>CH10_THIDA</name>
<proteinExistence type="inferred from homology"/>
<dbReference type="EMBL" id="CP000116">
    <property type="protein sequence ID" value="AAZ96045.1"/>
    <property type="molecule type" value="Genomic_DNA"/>
</dbReference>
<dbReference type="RefSeq" id="WP_011310605.1">
    <property type="nucleotide sequence ID" value="NC_007404.1"/>
</dbReference>
<dbReference type="SMR" id="Q3SMK0"/>
<dbReference type="STRING" id="292415.Tbd_0092"/>
<dbReference type="KEGG" id="tbd:Tbd_0092"/>
<dbReference type="eggNOG" id="COG0234">
    <property type="taxonomic scope" value="Bacteria"/>
</dbReference>
<dbReference type="HOGENOM" id="CLU_132825_0_0_4"/>
<dbReference type="OrthoDB" id="9806791at2"/>
<dbReference type="Proteomes" id="UP000008291">
    <property type="component" value="Chromosome"/>
</dbReference>
<dbReference type="GO" id="GO:0005737">
    <property type="term" value="C:cytoplasm"/>
    <property type="evidence" value="ECO:0007669"/>
    <property type="project" value="UniProtKB-SubCell"/>
</dbReference>
<dbReference type="GO" id="GO:0005524">
    <property type="term" value="F:ATP binding"/>
    <property type="evidence" value="ECO:0007669"/>
    <property type="project" value="InterPro"/>
</dbReference>
<dbReference type="GO" id="GO:0046872">
    <property type="term" value="F:metal ion binding"/>
    <property type="evidence" value="ECO:0007669"/>
    <property type="project" value="TreeGrafter"/>
</dbReference>
<dbReference type="GO" id="GO:0044183">
    <property type="term" value="F:protein folding chaperone"/>
    <property type="evidence" value="ECO:0007669"/>
    <property type="project" value="InterPro"/>
</dbReference>
<dbReference type="GO" id="GO:0051087">
    <property type="term" value="F:protein-folding chaperone binding"/>
    <property type="evidence" value="ECO:0007669"/>
    <property type="project" value="TreeGrafter"/>
</dbReference>
<dbReference type="GO" id="GO:0051082">
    <property type="term" value="F:unfolded protein binding"/>
    <property type="evidence" value="ECO:0007669"/>
    <property type="project" value="TreeGrafter"/>
</dbReference>
<dbReference type="GO" id="GO:0051085">
    <property type="term" value="P:chaperone cofactor-dependent protein refolding"/>
    <property type="evidence" value="ECO:0007669"/>
    <property type="project" value="TreeGrafter"/>
</dbReference>
<dbReference type="CDD" id="cd00320">
    <property type="entry name" value="cpn10"/>
    <property type="match status" value="1"/>
</dbReference>
<dbReference type="FunFam" id="2.30.33.40:FF:000001">
    <property type="entry name" value="10 kDa chaperonin"/>
    <property type="match status" value="1"/>
</dbReference>
<dbReference type="Gene3D" id="2.30.33.40">
    <property type="entry name" value="GroES chaperonin"/>
    <property type="match status" value="1"/>
</dbReference>
<dbReference type="HAMAP" id="MF_00580">
    <property type="entry name" value="CH10"/>
    <property type="match status" value="1"/>
</dbReference>
<dbReference type="InterPro" id="IPR020818">
    <property type="entry name" value="Chaperonin_GroES"/>
</dbReference>
<dbReference type="InterPro" id="IPR037124">
    <property type="entry name" value="Chaperonin_GroES_sf"/>
</dbReference>
<dbReference type="InterPro" id="IPR018369">
    <property type="entry name" value="Chaprnonin_Cpn10_CS"/>
</dbReference>
<dbReference type="InterPro" id="IPR011032">
    <property type="entry name" value="GroES-like_sf"/>
</dbReference>
<dbReference type="NCBIfam" id="NF001527">
    <property type="entry name" value="PRK00364.1-2"/>
    <property type="match status" value="1"/>
</dbReference>
<dbReference type="NCBIfam" id="NF001529">
    <property type="entry name" value="PRK00364.1-5"/>
    <property type="match status" value="1"/>
</dbReference>
<dbReference type="NCBIfam" id="NF001531">
    <property type="entry name" value="PRK00364.2-2"/>
    <property type="match status" value="1"/>
</dbReference>
<dbReference type="NCBIfam" id="NF001533">
    <property type="entry name" value="PRK00364.2-4"/>
    <property type="match status" value="1"/>
</dbReference>
<dbReference type="NCBIfam" id="NF001534">
    <property type="entry name" value="PRK00364.2-5"/>
    <property type="match status" value="1"/>
</dbReference>
<dbReference type="PANTHER" id="PTHR10772">
    <property type="entry name" value="10 KDA HEAT SHOCK PROTEIN"/>
    <property type="match status" value="1"/>
</dbReference>
<dbReference type="PANTHER" id="PTHR10772:SF58">
    <property type="entry name" value="CO-CHAPERONIN GROES"/>
    <property type="match status" value="1"/>
</dbReference>
<dbReference type="Pfam" id="PF00166">
    <property type="entry name" value="Cpn10"/>
    <property type="match status" value="1"/>
</dbReference>
<dbReference type="PRINTS" id="PR00297">
    <property type="entry name" value="CHAPERONIN10"/>
</dbReference>
<dbReference type="SMART" id="SM00883">
    <property type="entry name" value="Cpn10"/>
    <property type="match status" value="1"/>
</dbReference>
<dbReference type="SUPFAM" id="SSF50129">
    <property type="entry name" value="GroES-like"/>
    <property type="match status" value="1"/>
</dbReference>
<dbReference type="PROSITE" id="PS00681">
    <property type="entry name" value="CHAPERONINS_CPN10"/>
    <property type="match status" value="1"/>
</dbReference>
<protein>
    <recommendedName>
        <fullName evidence="1">Co-chaperonin GroES</fullName>
    </recommendedName>
    <alternativeName>
        <fullName evidence="1">10 kDa chaperonin</fullName>
    </alternativeName>
    <alternativeName>
        <fullName evidence="1">Chaperonin-10</fullName>
        <shortName evidence="1">Cpn10</shortName>
    </alternativeName>
</protein>
<accession>Q3SMK0</accession>